<sequence length="400" mass="43650">MSDIISIKDIDLAKKKIFIRCDFNVPQDDFLNITDDRRIRSAIPTIRYCLDNGCSVILASHLGRPKEISSKYSLEPVSKRLARLLDKEIIMAKDIIGEDAKTKAMNLKAGEILLLENLRFEKGETKNDENLAKELASMVQVYINDAFGVCHRAHSSVEAITKFFDEKHKGAGFLLQKEIDFASNLIKHPARPFVAVVGGSKVSGKLQALTNLLPKVDKLIIGGGMAFTFLKALGYDIGNSLLEEELLEEANKILTKGKNLGVKIYLPVDVVAAPACSQDAPMKFVPVQEIPNGWMGLDIGPASVRLFKEVISDAQTIWWNGPMGVFEIDKFSKGSIKMSHYISEGHATSVVGGGDTADVVARAGDADEMTFISTGGGASLELIEGKELPGVKALRSKENE</sequence>
<organism>
    <name type="scientific">Campylobacter jejuni subsp. doylei (strain ATCC BAA-1458 / RM4099 / 269.97)</name>
    <dbReference type="NCBI Taxonomy" id="360109"/>
    <lineage>
        <taxon>Bacteria</taxon>
        <taxon>Pseudomonadati</taxon>
        <taxon>Campylobacterota</taxon>
        <taxon>Epsilonproteobacteria</taxon>
        <taxon>Campylobacterales</taxon>
        <taxon>Campylobacteraceae</taxon>
        <taxon>Campylobacter</taxon>
    </lineage>
</organism>
<evidence type="ECO:0000255" key="1">
    <source>
        <dbReference type="HAMAP-Rule" id="MF_00145"/>
    </source>
</evidence>
<feature type="chain" id="PRO_1000203326" description="Phosphoglycerate kinase">
    <location>
        <begin position="1"/>
        <end position="400"/>
    </location>
</feature>
<feature type="binding site" evidence="1">
    <location>
        <begin position="22"/>
        <end position="24"/>
    </location>
    <ligand>
        <name>substrate</name>
    </ligand>
</feature>
<feature type="binding site" evidence="1">
    <location>
        <position position="38"/>
    </location>
    <ligand>
        <name>substrate</name>
    </ligand>
</feature>
<feature type="binding site" evidence="1">
    <location>
        <begin position="61"/>
        <end position="64"/>
    </location>
    <ligand>
        <name>substrate</name>
    </ligand>
</feature>
<feature type="binding site" evidence="1">
    <location>
        <position position="119"/>
    </location>
    <ligand>
        <name>substrate</name>
    </ligand>
</feature>
<feature type="binding site" evidence="1">
    <location>
        <position position="152"/>
    </location>
    <ligand>
        <name>substrate</name>
    </ligand>
</feature>
<feature type="binding site" evidence="1">
    <location>
        <position position="205"/>
    </location>
    <ligand>
        <name>ATP</name>
        <dbReference type="ChEBI" id="CHEBI:30616"/>
    </ligand>
</feature>
<feature type="binding site" evidence="1">
    <location>
        <position position="296"/>
    </location>
    <ligand>
        <name>ATP</name>
        <dbReference type="ChEBI" id="CHEBI:30616"/>
    </ligand>
</feature>
<feature type="binding site" evidence="1">
    <location>
        <position position="327"/>
    </location>
    <ligand>
        <name>ATP</name>
        <dbReference type="ChEBI" id="CHEBI:30616"/>
    </ligand>
</feature>
<feature type="binding site" evidence="1">
    <location>
        <begin position="353"/>
        <end position="356"/>
    </location>
    <ligand>
        <name>ATP</name>
        <dbReference type="ChEBI" id="CHEBI:30616"/>
    </ligand>
</feature>
<name>PGK_CAMJD</name>
<protein>
    <recommendedName>
        <fullName evidence="1">Phosphoglycerate kinase</fullName>
        <ecNumber evidence="1">2.7.2.3</ecNumber>
    </recommendedName>
</protein>
<reference key="1">
    <citation type="submission" date="2007-07" db="EMBL/GenBank/DDBJ databases">
        <title>Complete genome sequence of Campylobacter jejuni subsp doylei 269.97 isolated from human blood.</title>
        <authorList>
            <person name="Fouts D.E."/>
            <person name="Mongodin E.F."/>
            <person name="Puiu D."/>
            <person name="Sebastian Y."/>
            <person name="Miller W.G."/>
            <person name="Mandrell R.E."/>
            <person name="Lastovica A.J."/>
            <person name="Nelson K.E."/>
        </authorList>
    </citation>
    <scope>NUCLEOTIDE SEQUENCE [LARGE SCALE GENOMIC DNA]</scope>
    <source>
        <strain>ATCC BAA-1458 / RM4099 / 269.97</strain>
    </source>
</reference>
<comment type="catalytic activity">
    <reaction evidence="1">
        <text>(2R)-3-phosphoglycerate + ATP = (2R)-3-phospho-glyceroyl phosphate + ADP</text>
        <dbReference type="Rhea" id="RHEA:14801"/>
        <dbReference type="ChEBI" id="CHEBI:30616"/>
        <dbReference type="ChEBI" id="CHEBI:57604"/>
        <dbReference type="ChEBI" id="CHEBI:58272"/>
        <dbReference type="ChEBI" id="CHEBI:456216"/>
        <dbReference type="EC" id="2.7.2.3"/>
    </reaction>
</comment>
<comment type="pathway">
    <text evidence="1">Carbohydrate degradation; glycolysis; pyruvate from D-glyceraldehyde 3-phosphate: step 2/5.</text>
</comment>
<comment type="subunit">
    <text evidence="1">Monomer.</text>
</comment>
<comment type="subcellular location">
    <subcellularLocation>
        <location evidence="1">Cytoplasm</location>
    </subcellularLocation>
</comment>
<comment type="similarity">
    <text evidence="1">Belongs to the phosphoglycerate kinase family.</text>
</comment>
<dbReference type="EC" id="2.7.2.3" evidence="1"/>
<dbReference type="EMBL" id="CP000768">
    <property type="protein sequence ID" value="ABS43352.1"/>
    <property type="molecule type" value="Genomic_DNA"/>
</dbReference>
<dbReference type="SMR" id="A7H5C5"/>
<dbReference type="KEGG" id="cjd:JJD26997_1736"/>
<dbReference type="HOGENOM" id="CLU_025427_0_2_7"/>
<dbReference type="UniPathway" id="UPA00109">
    <property type="reaction ID" value="UER00185"/>
</dbReference>
<dbReference type="Proteomes" id="UP000002302">
    <property type="component" value="Chromosome"/>
</dbReference>
<dbReference type="GO" id="GO:0005829">
    <property type="term" value="C:cytosol"/>
    <property type="evidence" value="ECO:0007669"/>
    <property type="project" value="TreeGrafter"/>
</dbReference>
<dbReference type="GO" id="GO:0043531">
    <property type="term" value="F:ADP binding"/>
    <property type="evidence" value="ECO:0007669"/>
    <property type="project" value="TreeGrafter"/>
</dbReference>
<dbReference type="GO" id="GO:0005524">
    <property type="term" value="F:ATP binding"/>
    <property type="evidence" value="ECO:0007669"/>
    <property type="project" value="UniProtKB-KW"/>
</dbReference>
<dbReference type="GO" id="GO:0004618">
    <property type="term" value="F:phosphoglycerate kinase activity"/>
    <property type="evidence" value="ECO:0007669"/>
    <property type="project" value="UniProtKB-UniRule"/>
</dbReference>
<dbReference type="GO" id="GO:0006094">
    <property type="term" value="P:gluconeogenesis"/>
    <property type="evidence" value="ECO:0007669"/>
    <property type="project" value="TreeGrafter"/>
</dbReference>
<dbReference type="GO" id="GO:0006096">
    <property type="term" value="P:glycolytic process"/>
    <property type="evidence" value="ECO:0007669"/>
    <property type="project" value="UniProtKB-UniRule"/>
</dbReference>
<dbReference type="FunFam" id="3.40.50.1260:FF:000003">
    <property type="entry name" value="Phosphoglycerate kinase"/>
    <property type="match status" value="1"/>
</dbReference>
<dbReference type="FunFam" id="3.40.50.1260:FF:000006">
    <property type="entry name" value="Phosphoglycerate kinase"/>
    <property type="match status" value="1"/>
</dbReference>
<dbReference type="Gene3D" id="3.40.50.1260">
    <property type="entry name" value="Phosphoglycerate kinase, N-terminal domain"/>
    <property type="match status" value="2"/>
</dbReference>
<dbReference type="HAMAP" id="MF_00145">
    <property type="entry name" value="Phosphoglyc_kinase"/>
    <property type="match status" value="1"/>
</dbReference>
<dbReference type="InterPro" id="IPR001576">
    <property type="entry name" value="Phosphoglycerate_kinase"/>
</dbReference>
<dbReference type="InterPro" id="IPR015824">
    <property type="entry name" value="Phosphoglycerate_kinase_N"/>
</dbReference>
<dbReference type="InterPro" id="IPR036043">
    <property type="entry name" value="Phosphoglycerate_kinase_sf"/>
</dbReference>
<dbReference type="PANTHER" id="PTHR11406">
    <property type="entry name" value="PHOSPHOGLYCERATE KINASE"/>
    <property type="match status" value="1"/>
</dbReference>
<dbReference type="PANTHER" id="PTHR11406:SF23">
    <property type="entry name" value="PHOSPHOGLYCERATE KINASE 1, CHLOROPLASTIC-RELATED"/>
    <property type="match status" value="1"/>
</dbReference>
<dbReference type="Pfam" id="PF00162">
    <property type="entry name" value="PGK"/>
    <property type="match status" value="1"/>
</dbReference>
<dbReference type="PIRSF" id="PIRSF000724">
    <property type="entry name" value="Pgk"/>
    <property type="match status" value="1"/>
</dbReference>
<dbReference type="PRINTS" id="PR00477">
    <property type="entry name" value="PHGLYCKINASE"/>
</dbReference>
<dbReference type="SUPFAM" id="SSF53748">
    <property type="entry name" value="Phosphoglycerate kinase"/>
    <property type="match status" value="1"/>
</dbReference>
<gene>
    <name evidence="1" type="primary">pgk</name>
    <name type="ordered locus">JJD26997_1736</name>
</gene>
<keyword id="KW-0067">ATP-binding</keyword>
<keyword id="KW-0963">Cytoplasm</keyword>
<keyword id="KW-0324">Glycolysis</keyword>
<keyword id="KW-0418">Kinase</keyword>
<keyword id="KW-0547">Nucleotide-binding</keyword>
<keyword id="KW-0808">Transferase</keyword>
<accession>A7H5C5</accession>
<proteinExistence type="inferred from homology"/>